<organism>
    <name type="scientific">Staphylococcus aureus (strain N315)</name>
    <dbReference type="NCBI Taxonomy" id="158879"/>
    <lineage>
        <taxon>Bacteria</taxon>
        <taxon>Bacillati</taxon>
        <taxon>Bacillota</taxon>
        <taxon>Bacilli</taxon>
        <taxon>Bacillales</taxon>
        <taxon>Staphylococcaceae</taxon>
        <taxon>Staphylococcus</taxon>
    </lineage>
</organism>
<gene>
    <name type="primary">saeR</name>
    <name type="ordered locus">SA0661</name>
</gene>
<sequence>MTHLLIVDDEQDIVDICQTYFEYEGYKVTTTTSGKEAISLLSNDIDIMVLDIMMPEVNGYDIVKEMKRQKLDIPFIYLTAKTQEHDTIYALTLGADDYVKKPFSPRELVLRINNLLTRMKKYHHQPVEQLSFDELTLINLSKVVTVNGHEVPMRIKEFELLWYLASRENEVISKSELLEKVWGYDYYEDANTVNVHIHRIREKLEKESFTTYTITTVWGLGYKFERSR</sequence>
<protein>
    <recommendedName>
        <fullName>Response regulator SaeR</fullName>
    </recommendedName>
    <alternativeName>
        <fullName>Staphylococcus exoprotein expression protein R</fullName>
    </alternativeName>
</protein>
<evidence type="ECO:0000250" key="1"/>
<evidence type="ECO:0000255" key="2">
    <source>
        <dbReference type="PROSITE-ProRule" id="PRU00169"/>
    </source>
</evidence>
<evidence type="ECO:0000255" key="3">
    <source>
        <dbReference type="PROSITE-ProRule" id="PRU01091"/>
    </source>
</evidence>
<feature type="chain" id="PRO_0000295924" description="Response regulator SaeR">
    <location>
        <begin position="1"/>
        <end position="228"/>
    </location>
</feature>
<feature type="domain" description="Response regulatory" evidence="2">
    <location>
        <begin position="3"/>
        <end position="116"/>
    </location>
</feature>
<feature type="DNA-binding region" description="OmpR/PhoB-type" evidence="3">
    <location>
        <begin position="127"/>
        <end position="226"/>
    </location>
</feature>
<feature type="modified residue" description="4-aspartylphosphate" evidence="2">
    <location>
        <position position="51"/>
    </location>
</feature>
<comment type="function">
    <text evidence="1">Member of the two-component regulatory system SaeR/SaeS involved in the regulation of staphylococcal virulence factors in a strain-dependent fashion. Probably functions as a transcriptional regulator via a specific DNA-binding domain, recognizing motifs near the promoter sequences of target genes (By similarity).</text>
</comment>
<comment type="subcellular location">
    <subcellularLocation>
        <location evidence="1">Cytoplasm</location>
    </subcellularLocation>
</comment>
<comment type="PTM">
    <text evidence="1">Phosphorylated by SaeS.</text>
</comment>
<reference key="1">
    <citation type="journal article" date="2001" name="Lancet">
        <title>Whole genome sequencing of meticillin-resistant Staphylococcus aureus.</title>
        <authorList>
            <person name="Kuroda M."/>
            <person name="Ohta T."/>
            <person name="Uchiyama I."/>
            <person name="Baba T."/>
            <person name="Yuzawa H."/>
            <person name="Kobayashi I."/>
            <person name="Cui L."/>
            <person name="Oguchi A."/>
            <person name="Aoki K."/>
            <person name="Nagai Y."/>
            <person name="Lian J.-Q."/>
            <person name="Ito T."/>
            <person name="Kanamori M."/>
            <person name="Matsumaru H."/>
            <person name="Maruyama A."/>
            <person name="Murakami H."/>
            <person name="Hosoyama A."/>
            <person name="Mizutani-Ui Y."/>
            <person name="Takahashi N.K."/>
            <person name="Sawano T."/>
            <person name="Inoue R."/>
            <person name="Kaito C."/>
            <person name="Sekimizu K."/>
            <person name="Hirakawa H."/>
            <person name="Kuhara S."/>
            <person name="Goto S."/>
            <person name="Yabuzaki J."/>
            <person name="Kanehisa M."/>
            <person name="Yamashita A."/>
            <person name="Oshima K."/>
            <person name="Furuya K."/>
            <person name="Yoshino C."/>
            <person name="Shiba T."/>
            <person name="Hattori M."/>
            <person name="Ogasawara N."/>
            <person name="Hayashi H."/>
            <person name="Hiramatsu K."/>
        </authorList>
    </citation>
    <scope>NUCLEOTIDE SEQUENCE [LARGE SCALE GENOMIC DNA]</scope>
    <source>
        <strain>N315</strain>
    </source>
</reference>
<reference key="2">
    <citation type="submission" date="2007-10" db="UniProtKB">
        <title>Shotgun proteomic analysis of total and membrane protein extracts of S. aureus strain N315.</title>
        <authorList>
            <person name="Vaezzadeh A.R."/>
            <person name="Deshusses J."/>
            <person name="Lescuyer P."/>
            <person name="Hochstrasser D.F."/>
        </authorList>
    </citation>
    <scope>IDENTIFICATION BY MASS SPECTROMETRY [LARGE SCALE ANALYSIS]</scope>
    <source>
        <strain>N315</strain>
    </source>
</reference>
<dbReference type="EMBL" id="BA000018">
    <property type="protein sequence ID" value="BAB41894.1"/>
    <property type="molecule type" value="Genomic_DNA"/>
</dbReference>
<dbReference type="PIR" id="C89842">
    <property type="entry name" value="C89842"/>
</dbReference>
<dbReference type="RefSeq" id="WP_000149344.1">
    <property type="nucleotide sequence ID" value="NC_002745.2"/>
</dbReference>
<dbReference type="SMR" id="Q7A6V3"/>
<dbReference type="EnsemblBacteria" id="BAB41894">
    <property type="protein sequence ID" value="BAB41894"/>
    <property type="gene ID" value="BAB41894"/>
</dbReference>
<dbReference type="KEGG" id="sau:SA0661"/>
<dbReference type="HOGENOM" id="CLU_000445_30_4_9"/>
<dbReference type="GO" id="GO:0005829">
    <property type="term" value="C:cytosol"/>
    <property type="evidence" value="ECO:0007669"/>
    <property type="project" value="TreeGrafter"/>
</dbReference>
<dbReference type="GO" id="GO:0032993">
    <property type="term" value="C:protein-DNA complex"/>
    <property type="evidence" value="ECO:0007669"/>
    <property type="project" value="TreeGrafter"/>
</dbReference>
<dbReference type="GO" id="GO:0000156">
    <property type="term" value="F:phosphorelay response regulator activity"/>
    <property type="evidence" value="ECO:0007669"/>
    <property type="project" value="TreeGrafter"/>
</dbReference>
<dbReference type="GO" id="GO:0000976">
    <property type="term" value="F:transcription cis-regulatory region binding"/>
    <property type="evidence" value="ECO:0007669"/>
    <property type="project" value="TreeGrafter"/>
</dbReference>
<dbReference type="GO" id="GO:0006355">
    <property type="term" value="P:regulation of DNA-templated transcription"/>
    <property type="evidence" value="ECO:0007669"/>
    <property type="project" value="InterPro"/>
</dbReference>
<dbReference type="CDD" id="cd17574">
    <property type="entry name" value="REC_OmpR"/>
    <property type="match status" value="1"/>
</dbReference>
<dbReference type="CDD" id="cd00383">
    <property type="entry name" value="trans_reg_C"/>
    <property type="match status" value="1"/>
</dbReference>
<dbReference type="FunFam" id="1.10.10.10:FF:000018">
    <property type="entry name" value="DNA-binding response regulator ResD"/>
    <property type="match status" value="1"/>
</dbReference>
<dbReference type="Gene3D" id="3.40.50.2300">
    <property type="match status" value="1"/>
</dbReference>
<dbReference type="Gene3D" id="6.10.250.690">
    <property type="match status" value="1"/>
</dbReference>
<dbReference type="Gene3D" id="1.10.10.10">
    <property type="entry name" value="Winged helix-like DNA-binding domain superfamily/Winged helix DNA-binding domain"/>
    <property type="match status" value="1"/>
</dbReference>
<dbReference type="InterPro" id="IPR011006">
    <property type="entry name" value="CheY-like_superfamily"/>
</dbReference>
<dbReference type="InterPro" id="IPR001867">
    <property type="entry name" value="OmpR/PhoB-type_DNA-bd"/>
</dbReference>
<dbReference type="InterPro" id="IPR001789">
    <property type="entry name" value="Sig_transdc_resp-reg_receiver"/>
</dbReference>
<dbReference type="InterPro" id="IPR039420">
    <property type="entry name" value="WalR-like"/>
</dbReference>
<dbReference type="InterPro" id="IPR036388">
    <property type="entry name" value="WH-like_DNA-bd_sf"/>
</dbReference>
<dbReference type="PANTHER" id="PTHR48111">
    <property type="entry name" value="REGULATOR OF RPOS"/>
    <property type="match status" value="1"/>
</dbReference>
<dbReference type="PANTHER" id="PTHR48111:SF2">
    <property type="entry name" value="RESPONSE REGULATOR SAER"/>
    <property type="match status" value="1"/>
</dbReference>
<dbReference type="Pfam" id="PF00072">
    <property type="entry name" value="Response_reg"/>
    <property type="match status" value="1"/>
</dbReference>
<dbReference type="Pfam" id="PF00486">
    <property type="entry name" value="Trans_reg_C"/>
    <property type="match status" value="1"/>
</dbReference>
<dbReference type="SMART" id="SM00448">
    <property type="entry name" value="REC"/>
    <property type="match status" value="1"/>
</dbReference>
<dbReference type="SMART" id="SM00862">
    <property type="entry name" value="Trans_reg_C"/>
    <property type="match status" value="1"/>
</dbReference>
<dbReference type="SUPFAM" id="SSF52172">
    <property type="entry name" value="CheY-like"/>
    <property type="match status" value="1"/>
</dbReference>
<dbReference type="PROSITE" id="PS51755">
    <property type="entry name" value="OMPR_PHOB"/>
    <property type="match status" value="1"/>
</dbReference>
<dbReference type="PROSITE" id="PS50110">
    <property type="entry name" value="RESPONSE_REGULATORY"/>
    <property type="match status" value="1"/>
</dbReference>
<accession>Q7A6V3</accession>
<proteinExistence type="evidence at protein level"/>
<name>SAER_STAAN</name>
<keyword id="KW-0963">Cytoplasm</keyword>
<keyword id="KW-0238">DNA-binding</keyword>
<keyword id="KW-0597">Phosphoprotein</keyword>
<keyword id="KW-0716">Sensory transduction</keyword>
<keyword id="KW-0804">Transcription</keyword>
<keyword id="KW-0805">Transcription regulation</keyword>
<keyword id="KW-0902">Two-component regulatory system</keyword>
<keyword id="KW-0843">Virulence</keyword>